<comment type="function">
    <text evidence="1">This protein specifically catalyzes the removal of signal peptides from prolipoproteins.</text>
</comment>
<comment type="catalytic activity">
    <reaction evidence="1">
        <text>Release of signal peptides from bacterial membrane prolipoproteins. Hydrolyzes -Xaa-Yaa-Zaa-|-(S,diacylglyceryl)Cys-, in which Xaa is hydrophobic (preferably Leu), and Yaa (Ala or Ser) and Zaa (Gly or Ala) have small, neutral side chains.</text>
        <dbReference type="EC" id="3.4.23.36"/>
    </reaction>
</comment>
<comment type="pathway">
    <text evidence="1">Protein modification; lipoprotein biosynthesis (signal peptide cleavage).</text>
</comment>
<comment type="subcellular location">
    <subcellularLocation>
        <location evidence="1">Cell inner membrane</location>
        <topology evidence="1">Multi-pass membrane protein</topology>
    </subcellularLocation>
</comment>
<comment type="similarity">
    <text evidence="1 2">Belongs to the peptidase A8 family.</text>
</comment>
<organism>
    <name type="scientific">Pasteurella multocida (strain Pm70)</name>
    <dbReference type="NCBI Taxonomy" id="272843"/>
    <lineage>
        <taxon>Bacteria</taxon>
        <taxon>Pseudomonadati</taxon>
        <taxon>Pseudomonadota</taxon>
        <taxon>Gammaproteobacteria</taxon>
        <taxon>Pasteurellales</taxon>
        <taxon>Pasteurellaceae</taxon>
        <taxon>Pasteurella</taxon>
    </lineage>
</organism>
<name>LSPA_PASMU</name>
<sequence length="165" mass="18988">MTKSKSGLSFLWLSAVTFLLDLSSKYFVVKNFELYESINILPVFNLTYVRNYGAAFSFLADHDGWQKYFFIVLAIAISLMLCYFLAKNQATQKLQNIAYALIIGGALGNMIDRLYHGFVVDFFDFYWDIYHYPVFNVADIAISLGAGLMILDAFKNRHEPEQRTE</sequence>
<accession>P57959</accession>
<proteinExistence type="inferred from homology"/>
<keyword id="KW-0064">Aspartyl protease</keyword>
<keyword id="KW-0997">Cell inner membrane</keyword>
<keyword id="KW-1003">Cell membrane</keyword>
<keyword id="KW-0378">Hydrolase</keyword>
<keyword id="KW-0472">Membrane</keyword>
<keyword id="KW-0645">Protease</keyword>
<keyword id="KW-1185">Reference proteome</keyword>
<keyword id="KW-0812">Transmembrane</keyword>
<keyword id="KW-1133">Transmembrane helix</keyword>
<dbReference type="EC" id="3.4.23.36" evidence="1"/>
<dbReference type="EMBL" id="AE004439">
    <property type="protein sequence ID" value="AAK03747.1"/>
    <property type="molecule type" value="Genomic_DNA"/>
</dbReference>
<dbReference type="RefSeq" id="WP_005724521.1">
    <property type="nucleotide sequence ID" value="NC_002663.1"/>
</dbReference>
<dbReference type="SMR" id="P57959"/>
<dbReference type="STRING" id="272843.PM1663"/>
<dbReference type="MEROPS" id="A08.001"/>
<dbReference type="EnsemblBacteria" id="AAK03747">
    <property type="protein sequence ID" value="AAK03747"/>
    <property type="gene ID" value="PM1663"/>
</dbReference>
<dbReference type="KEGG" id="pmu:PM1663"/>
<dbReference type="HOGENOM" id="CLU_083252_4_0_6"/>
<dbReference type="OrthoDB" id="9810259at2"/>
<dbReference type="UniPathway" id="UPA00665"/>
<dbReference type="Proteomes" id="UP000000809">
    <property type="component" value="Chromosome"/>
</dbReference>
<dbReference type="GO" id="GO:0005886">
    <property type="term" value="C:plasma membrane"/>
    <property type="evidence" value="ECO:0007669"/>
    <property type="project" value="UniProtKB-SubCell"/>
</dbReference>
<dbReference type="GO" id="GO:0004190">
    <property type="term" value="F:aspartic-type endopeptidase activity"/>
    <property type="evidence" value="ECO:0007669"/>
    <property type="project" value="UniProtKB-UniRule"/>
</dbReference>
<dbReference type="GO" id="GO:0006508">
    <property type="term" value="P:proteolysis"/>
    <property type="evidence" value="ECO:0007669"/>
    <property type="project" value="UniProtKB-KW"/>
</dbReference>
<dbReference type="HAMAP" id="MF_00161">
    <property type="entry name" value="LspA"/>
    <property type="match status" value="1"/>
</dbReference>
<dbReference type="InterPro" id="IPR001872">
    <property type="entry name" value="Peptidase_A8"/>
</dbReference>
<dbReference type="NCBIfam" id="TIGR00077">
    <property type="entry name" value="lspA"/>
    <property type="match status" value="1"/>
</dbReference>
<dbReference type="PANTHER" id="PTHR33695">
    <property type="entry name" value="LIPOPROTEIN SIGNAL PEPTIDASE"/>
    <property type="match status" value="1"/>
</dbReference>
<dbReference type="PANTHER" id="PTHR33695:SF1">
    <property type="entry name" value="LIPOPROTEIN SIGNAL PEPTIDASE"/>
    <property type="match status" value="1"/>
</dbReference>
<dbReference type="Pfam" id="PF01252">
    <property type="entry name" value="Peptidase_A8"/>
    <property type="match status" value="1"/>
</dbReference>
<dbReference type="PRINTS" id="PR00781">
    <property type="entry name" value="LIPOSIGPTASE"/>
</dbReference>
<dbReference type="PROSITE" id="PS00855">
    <property type="entry name" value="SPASE_II"/>
    <property type="match status" value="1"/>
</dbReference>
<reference key="1">
    <citation type="journal article" date="2001" name="Proc. Natl. Acad. Sci. U.S.A.">
        <title>Complete genomic sequence of Pasteurella multocida Pm70.</title>
        <authorList>
            <person name="May B.J."/>
            <person name="Zhang Q."/>
            <person name="Li L.L."/>
            <person name="Paustian M.L."/>
            <person name="Whittam T.S."/>
            <person name="Kapur V."/>
        </authorList>
    </citation>
    <scope>NUCLEOTIDE SEQUENCE [LARGE SCALE GENOMIC DNA]</scope>
    <source>
        <strain>Pm70</strain>
    </source>
</reference>
<gene>
    <name evidence="1" type="primary">lspA</name>
    <name type="ordered locus">PM1663</name>
</gene>
<protein>
    <recommendedName>
        <fullName evidence="1">Lipoprotein signal peptidase</fullName>
        <ecNumber evidence="1">3.4.23.36</ecNumber>
    </recommendedName>
    <alternativeName>
        <fullName evidence="1">Prolipoprotein signal peptidase</fullName>
    </alternativeName>
    <alternativeName>
        <fullName evidence="1">Signal peptidase II</fullName>
        <shortName evidence="1">SPase II</shortName>
    </alternativeName>
</protein>
<feature type="chain" id="PRO_0000178801" description="Lipoprotein signal peptidase">
    <location>
        <begin position="1"/>
        <end position="165"/>
    </location>
</feature>
<feature type="transmembrane region" description="Helical" evidence="1">
    <location>
        <begin position="9"/>
        <end position="29"/>
    </location>
</feature>
<feature type="transmembrane region" description="Helical" evidence="1">
    <location>
        <begin position="65"/>
        <end position="85"/>
    </location>
</feature>
<feature type="transmembrane region" description="Helical" evidence="1">
    <location>
        <begin position="100"/>
        <end position="120"/>
    </location>
</feature>
<feature type="transmembrane region" description="Helical" evidence="1">
    <location>
        <begin position="134"/>
        <end position="154"/>
    </location>
</feature>
<feature type="active site" evidence="1">
    <location>
        <position position="121"/>
    </location>
</feature>
<feature type="active site" evidence="1">
    <location>
        <position position="139"/>
    </location>
</feature>
<evidence type="ECO:0000255" key="1">
    <source>
        <dbReference type="HAMAP-Rule" id="MF_00161"/>
    </source>
</evidence>
<evidence type="ECO:0000305" key="2"/>